<evidence type="ECO:0000250" key="1"/>
<evidence type="ECO:0000250" key="2">
    <source>
        <dbReference type="UniProtKB" id="Q13043"/>
    </source>
</evidence>
<evidence type="ECO:0000250" key="3">
    <source>
        <dbReference type="UniProtKB" id="Q9JI11"/>
    </source>
</evidence>
<evidence type="ECO:0000255" key="4"/>
<evidence type="ECO:0000255" key="5">
    <source>
        <dbReference type="PROSITE-ProRule" id="PRU00159"/>
    </source>
</evidence>
<evidence type="ECO:0000255" key="6">
    <source>
        <dbReference type="PROSITE-ProRule" id="PRU00310"/>
    </source>
</evidence>
<evidence type="ECO:0000256" key="7">
    <source>
        <dbReference type="SAM" id="MobiDB-lite"/>
    </source>
</evidence>
<evidence type="ECO:0000305" key="8"/>
<proteinExistence type="evidence at transcript level"/>
<gene>
    <name type="primary">STK4</name>
    <name type="synonym">MST1</name>
</gene>
<accession>Q5E9L6</accession>
<accession>Q2KI66</accession>
<reference key="1">
    <citation type="journal article" date="2005" name="BMC Genomics">
        <title>Characterization of 954 bovine full-CDS cDNA sequences.</title>
        <authorList>
            <person name="Harhay G.P."/>
            <person name="Sonstegard T.S."/>
            <person name="Keele J.W."/>
            <person name="Heaton M.P."/>
            <person name="Clawson M.L."/>
            <person name="Snelling W.M."/>
            <person name="Wiedmann R.T."/>
            <person name="Van Tassell C.P."/>
            <person name="Smith T.P.L."/>
        </authorList>
    </citation>
    <scope>NUCLEOTIDE SEQUENCE [LARGE SCALE MRNA]</scope>
</reference>
<reference key="2">
    <citation type="submission" date="2006-01" db="EMBL/GenBank/DDBJ databases">
        <authorList>
            <consortium name="NIH - Mammalian Gene Collection (MGC) project"/>
        </authorList>
    </citation>
    <scope>NUCLEOTIDE SEQUENCE [LARGE SCALE MRNA] OF 1-403</scope>
    <source>
        <strain>Hereford</strain>
        <tissue>Hypothalamus</tissue>
    </source>
</reference>
<feature type="chain" id="PRO_0000246626" description="Serine/threonine-protein kinase 4">
    <location>
        <begin position="1"/>
        <end position="487"/>
    </location>
</feature>
<feature type="chain" id="PRO_0000413729" description="Serine/threonine-protein kinase 4 37kDa subunit" evidence="1">
    <location>
        <begin position="1"/>
        <end position="326"/>
    </location>
</feature>
<feature type="chain" id="PRO_0000413730" description="Serine/threonine-protein kinase 4 18kDa subunit" evidence="1">
    <location>
        <begin position="327"/>
        <end position="487"/>
    </location>
</feature>
<feature type="domain" description="Protein kinase" evidence="5">
    <location>
        <begin position="30"/>
        <end position="281"/>
    </location>
</feature>
<feature type="domain" description="SARAH" evidence="6">
    <location>
        <begin position="433"/>
        <end position="480"/>
    </location>
</feature>
<feature type="region of interest" description="Disordered" evidence="7">
    <location>
        <begin position="305"/>
        <end position="332"/>
    </location>
</feature>
<feature type="coiled-coil region" evidence="4">
    <location>
        <begin position="289"/>
        <end position="327"/>
    </location>
</feature>
<feature type="compositionally biased region" description="Acidic residues" evidence="7">
    <location>
        <begin position="313"/>
        <end position="326"/>
    </location>
</feature>
<feature type="active site" description="Proton acceptor" evidence="5">
    <location>
        <position position="149"/>
    </location>
</feature>
<feature type="binding site" evidence="5">
    <location>
        <begin position="36"/>
        <end position="44"/>
    </location>
    <ligand>
        <name>ATP</name>
        <dbReference type="ChEBI" id="CHEBI:30616"/>
    </ligand>
</feature>
<feature type="binding site" evidence="5">
    <location>
        <position position="59"/>
    </location>
    <ligand>
        <name>ATP</name>
        <dbReference type="ChEBI" id="CHEBI:30616"/>
    </ligand>
</feature>
<feature type="site" description="Cleavage; by caspase-3" evidence="1">
    <location>
        <begin position="326"/>
        <end position="327"/>
    </location>
</feature>
<feature type="modified residue" description="N-acetylmethionine" evidence="2">
    <location>
        <position position="1"/>
    </location>
</feature>
<feature type="modified residue" description="Phosphothreonine" evidence="2">
    <location>
        <position position="3"/>
    </location>
</feature>
<feature type="modified residue" description="Phosphothreonine; by autocatalysis" evidence="2">
    <location>
        <position position="183"/>
    </location>
</feature>
<feature type="modified residue" description="Phosphoserine" evidence="2">
    <location>
        <position position="265"/>
    </location>
</feature>
<feature type="modified residue" description="Phosphoserine" evidence="2">
    <location>
        <position position="320"/>
    </location>
</feature>
<feature type="modified residue" description="Phosphothreonine" evidence="2">
    <location>
        <position position="340"/>
    </location>
</feature>
<feature type="modified residue" description="Phosphothreonine" evidence="2">
    <location>
        <position position="367"/>
    </location>
</feature>
<feature type="modified residue" description="Phosphothreonine; by PKB/AKT1" evidence="2">
    <location>
        <position position="387"/>
    </location>
</feature>
<feature type="modified residue" description="Phosphoserine" evidence="2">
    <location>
        <position position="410"/>
    </location>
</feature>
<feature type="modified residue" description="Phosphoserine" evidence="2">
    <location>
        <position position="414"/>
    </location>
</feature>
<feature type="modified residue" description="Phosphotyrosine" evidence="3">
    <location>
        <position position="433"/>
    </location>
</feature>
<name>STK4_BOVIN</name>
<dbReference type="EC" id="2.7.11.1"/>
<dbReference type="EMBL" id="BT020904">
    <property type="protein sequence ID" value="AAX08921.1"/>
    <property type="molecule type" value="mRNA"/>
</dbReference>
<dbReference type="EMBL" id="BC112753">
    <property type="protein sequence ID" value="AAI12754.1"/>
    <property type="status" value="ALT_SEQ"/>
    <property type="molecule type" value="mRNA"/>
</dbReference>
<dbReference type="RefSeq" id="NP_001015602.1">
    <property type="nucleotide sequence ID" value="NM_001015602.1"/>
</dbReference>
<dbReference type="SMR" id="Q5E9L6"/>
<dbReference type="FunCoup" id="Q5E9L6">
    <property type="interactions" value="3947"/>
</dbReference>
<dbReference type="STRING" id="9913.ENSBTAP00000004221"/>
<dbReference type="PaxDb" id="9913-ENSBTAP00000004221"/>
<dbReference type="GeneID" id="514886"/>
<dbReference type="KEGG" id="bta:514886"/>
<dbReference type="CTD" id="6789"/>
<dbReference type="VEuPathDB" id="HostDB:ENSBTAG00000003257"/>
<dbReference type="eggNOG" id="KOG0574">
    <property type="taxonomic scope" value="Eukaryota"/>
</dbReference>
<dbReference type="HOGENOM" id="CLU_000288_63_23_1"/>
<dbReference type="InParanoid" id="Q5E9L6"/>
<dbReference type="OMA" id="CDAMKIT"/>
<dbReference type="OrthoDB" id="8693905at2759"/>
<dbReference type="TreeFam" id="TF354217"/>
<dbReference type="Reactome" id="R-BTA-2028269">
    <property type="pathway name" value="Signaling by Hippo"/>
</dbReference>
<dbReference type="Proteomes" id="UP000009136">
    <property type="component" value="Chromosome 13"/>
</dbReference>
<dbReference type="Bgee" id="ENSBTAG00000003257">
    <property type="expression patterns" value="Expressed in neutrophil and 107 other cell types or tissues"/>
</dbReference>
<dbReference type="GO" id="GO:0005737">
    <property type="term" value="C:cytoplasm"/>
    <property type="evidence" value="ECO:0000250"/>
    <property type="project" value="UniProtKB"/>
</dbReference>
<dbReference type="GO" id="GO:0005634">
    <property type="term" value="C:nucleus"/>
    <property type="evidence" value="ECO:0000250"/>
    <property type="project" value="UniProtKB"/>
</dbReference>
<dbReference type="GO" id="GO:0005524">
    <property type="term" value="F:ATP binding"/>
    <property type="evidence" value="ECO:0007669"/>
    <property type="project" value="UniProtKB-KW"/>
</dbReference>
<dbReference type="GO" id="GO:0046872">
    <property type="term" value="F:metal ion binding"/>
    <property type="evidence" value="ECO:0007669"/>
    <property type="project" value="UniProtKB-KW"/>
</dbReference>
<dbReference type="GO" id="GO:0106310">
    <property type="term" value="F:protein serine kinase activity"/>
    <property type="evidence" value="ECO:0007669"/>
    <property type="project" value="RHEA"/>
</dbReference>
<dbReference type="GO" id="GO:0004674">
    <property type="term" value="F:protein serine/threonine kinase activity"/>
    <property type="evidence" value="ECO:0000250"/>
    <property type="project" value="UniProtKB"/>
</dbReference>
<dbReference type="GO" id="GO:0006915">
    <property type="term" value="P:apoptotic process"/>
    <property type="evidence" value="ECO:0000250"/>
    <property type="project" value="UniProtKB"/>
</dbReference>
<dbReference type="GO" id="GO:0035329">
    <property type="term" value="P:hippo signaling"/>
    <property type="evidence" value="ECO:0000250"/>
    <property type="project" value="UniProtKB"/>
</dbReference>
<dbReference type="GO" id="GO:0035556">
    <property type="term" value="P:intracellular signal transduction"/>
    <property type="evidence" value="ECO:0000318"/>
    <property type="project" value="GO_Central"/>
</dbReference>
<dbReference type="GO" id="GO:0090090">
    <property type="term" value="P:negative regulation of canonical Wnt signaling pathway"/>
    <property type="evidence" value="ECO:0000318"/>
    <property type="project" value="GO_Central"/>
</dbReference>
<dbReference type="GO" id="GO:0043065">
    <property type="term" value="P:positive regulation of apoptotic process"/>
    <property type="evidence" value="ECO:0000318"/>
    <property type="project" value="GO_Central"/>
</dbReference>
<dbReference type="GO" id="GO:0051262">
    <property type="term" value="P:protein tetramerization"/>
    <property type="evidence" value="ECO:0007669"/>
    <property type="project" value="InterPro"/>
</dbReference>
<dbReference type="GO" id="GO:0043408">
    <property type="term" value="P:regulation of MAPK cascade"/>
    <property type="evidence" value="ECO:0000318"/>
    <property type="project" value="GO_Central"/>
</dbReference>
<dbReference type="CDD" id="cd21887">
    <property type="entry name" value="SARAH_MST1"/>
    <property type="match status" value="1"/>
</dbReference>
<dbReference type="CDD" id="cd06612">
    <property type="entry name" value="STKc_MST1_2"/>
    <property type="match status" value="1"/>
</dbReference>
<dbReference type="FunFam" id="1.10.510.10:FF:000075">
    <property type="entry name" value="Serine/threonine-protein kinase 3"/>
    <property type="match status" value="1"/>
</dbReference>
<dbReference type="FunFam" id="3.30.200.20:FF:000410">
    <property type="entry name" value="Serine/threonine-protein kinase 3"/>
    <property type="match status" value="1"/>
</dbReference>
<dbReference type="FunFam" id="4.10.170.10:FF:000002">
    <property type="entry name" value="serine/threonine-protein kinase 3"/>
    <property type="match status" value="1"/>
</dbReference>
<dbReference type="FunFam" id="1.10.287.4270:FF:000004">
    <property type="entry name" value="Serine/threonine-protein kinase 3/4"/>
    <property type="match status" value="1"/>
</dbReference>
<dbReference type="FunFam" id="1.10.287.4270:FF:000002">
    <property type="entry name" value="Serine/threonine-protein kinase 4"/>
    <property type="match status" value="1"/>
</dbReference>
<dbReference type="Gene3D" id="1.10.287.4270">
    <property type="match status" value="1"/>
</dbReference>
<dbReference type="Gene3D" id="4.10.170.10">
    <property type="entry name" value="p53-like tetramerisation domain"/>
    <property type="match status" value="1"/>
</dbReference>
<dbReference type="Gene3D" id="1.10.510.10">
    <property type="entry name" value="Transferase(Phosphotransferase) domain 1"/>
    <property type="match status" value="1"/>
</dbReference>
<dbReference type="InterPro" id="IPR011009">
    <property type="entry name" value="Kinase-like_dom_sf"/>
</dbReference>
<dbReference type="InterPro" id="IPR024205">
    <property type="entry name" value="Mst1_2_SARAH_domain"/>
</dbReference>
<dbReference type="InterPro" id="IPR036674">
    <property type="entry name" value="p53_tetramer_sf"/>
</dbReference>
<dbReference type="InterPro" id="IPR000719">
    <property type="entry name" value="Prot_kinase_dom"/>
</dbReference>
<dbReference type="InterPro" id="IPR017441">
    <property type="entry name" value="Protein_kinase_ATP_BS"/>
</dbReference>
<dbReference type="InterPro" id="IPR011524">
    <property type="entry name" value="SARAH_dom"/>
</dbReference>
<dbReference type="InterPro" id="IPR050629">
    <property type="entry name" value="STE20/SPS1-PAK"/>
</dbReference>
<dbReference type="PANTHER" id="PTHR48012:SF2">
    <property type="entry name" value="STERILE20-LIKE KINASE, ISOFORM B"/>
    <property type="match status" value="1"/>
</dbReference>
<dbReference type="PANTHER" id="PTHR48012">
    <property type="entry name" value="STERILE20-LIKE KINASE, ISOFORM B-RELATED"/>
    <property type="match status" value="1"/>
</dbReference>
<dbReference type="Pfam" id="PF11629">
    <property type="entry name" value="Mst1_SARAH"/>
    <property type="match status" value="1"/>
</dbReference>
<dbReference type="Pfam" id="PF00069">
    <property type="entry name" value="Pkinase"/>
    <property type="match status" value="1"/>
</dbReference>
<dbReference type="SMART" id="SM00220">
    <property type="entry name" value="S_TKc"/>
    <property type="match status" value="1"/>
</dbReference>
<dbReference type="SUPFAM" id="SSF56112">
    <property type="entry name" value="Protein kinase-like (PK-like)"/>
    <property type="match status" value="1"/>
</dbReference>
<dbReference type="PROSITE" id="PS00107">
    <property type="entry name" value="PROTEIN_KINASE_ATP"/>
    <property type="match status" value="1"/>
</dbReference>
<dbReference type="PROSITE" id="PS50011">
    <property type="entry name" value="PROTEIN_KINASE_DOM"/>
    <property type="match status" value="1"/>
</dbReference>
<dbReference type="PROSITE" id="PS50951">
    <property type="entry name" value="SARAH"/>
    <property type="match status" value="1"/>
</dbReference>
<keyword id="KW-0007">Acetylation</keyword>
<keyword id="KW-0053">Apoptosis</keyword>
<keyword id="KW-0067">ATP-binding</keyword>
<keyword id="KW-0175">Coiled coil</keyword>
<keyword id="KW-0963">Cytoplasm</keyword>
<keyword id="KW-0418">Kinase</keyword>
<keyword id="KW-0460">Magnesium</keyword>
<keyword id="KW-0479">Metal-binding</keyword>
<keyword id="KW-0547">Nucleotide-binding</keyword>
<keyword id="KW-0539">Nucleus</keyword>
<keyword id="KW-0597">Phosphoprotein</keyword>
<keyword id="KW-1185">Reference proteome</keyword>
<keyword id="KW-0723">Serine/threonine-protein kinase</keyword>
<keyword id="KW-0808">Transferase</keyword>
<sequence>METVQLRNPPRRQLKKLDEDSLTKQPEEVFDVLEKLGEGSYGSVYKAIHKETGQIVAIKQVPVESDLQEIIKEISIMQQCDSPHVVKYYGSYFKNTDLWIVMEYCGAGSVSDIIRLRNKTLTEDEIATILQSTLKGLEYLHFMRKIHRDIKAGNILLNTEGHAKLADFGVAGQLTDTMAKRNTVIGTPFWMAPEVIQEIGYNCVADIWSLGITAIEMAEGKPPYADIHPMRAIFMIPTNPPPTFRKPELWSDSFMDFVKQCLVKSPEQRATATQLLQHPFVKSAKGVSILRDLINEAMDVKLKRQEAQQREVDQEEEENSEEDELDSGTMVRAAGDEMGTVRVASSMSDGANTMIEHDDTLPSQLGTMVINTEDEEEEGTMKRRDETMQPARPSFLEYFEQKEKENQINSFGKSVPGPLQNSSDWKVPQDGDYEFLKSWTVEDLQKRLLALDPMMEQEIEEIRQKYQSKRQPILDAIEAKKRRQQNF</sequence>
<comment type="function">
    <text evidence="2 3">Stress-activated, pro-apoptotic kinase which, following caspase-cleavage, enters the nucleus and induces chromatin condensation followed by internucleosomal DNA fragmentation. Key component of the Hippo signaling pathway which plays a pivotal role in organ size control and tumor suppression by restricting proliferation and promoting apoptosis. The core of this pathway is composed of a kinase cascade wherein STK3/MST2 and STK4/MST1, in complex with its regulatory protein SAV1, phosphorylates and activates LATS1/2 in complex with its regulatory protein MOB1, which in turn phosphorylates and inactivates YAP1 oncoprotein and WWTR1/TAZ. Phosphorylation of YAP1 by LATS2 inhibits its translocation into the nucleus to regulate cellular genes important for cell proliferation, cell death, and cell migration. STK3/MST2 and STK4/MST1 are required to repress proliferation of mature hepatocytes, to prevent activation of facultative adult liver stem cells (oval cells), and to inhibit tumor formation. Phosphorylates 'Ser-14' of histone H2B (H2BS14ph) during apoptosis. Phosphorylates FOXO3 upon oxidative stress, which results in its nuclear translocation and cell death initiation. Phosphorylates MOBKL1A, MOBKL1B and RASSF2. Phosphorylates TNNI3 (cardiac Tn-I) and alters its binding affinity to TNNC1 (cardiac Tn-C) and TNNT2 (cardiac Tn-T). Phosphorylates FOXO1 on 'Ser-212' and regulates its activation and stimulates transcription of PMAIP1 in a FOXO1-dependent manner. Phosphorylates SIRT1 and inhibits SIRT1-mediated p53/TP53 deacetylation, thereby promoting p53/TP53 dependent transcription and apoptosis upon DNA damage. Acts as an inhibitor of PKB/AKT1. Phosphorylates AR on 'Ser-650' and suppresses its activity by intersecting with PKB/AKT1 signaling and antagonizing formation of AR-chromatin complexes.</text>
</comment>
<comment type="catalytic activity">
    <reaction evidence="2">
        <text>L-seryl-[protein] + ATP = O-phospho-L-seryl-[protein] + ADP + H(+)</text>
        <dbReference type="Rhea" id="RHEA:17989"/>
        <dbReference type="Rhea" id="RHEA-COMP:9863"/>
        <dbReference type="Rhea" id="RHEA-COMP:11604"/>
        <dbReference type="ChEBI" id="CHEBI:15378"/>
        <dbReference type="ChEBI" id="CHEBI:29999"/>
        <dbReference type="ChEBI" id="CHEBI:30616"/>
        <dbReference type="ChEBI" id="CHEBI:83421"/>
        <dbReference type="ChEBI" id="CHEBI:456216"/>
        <dbReference type="EC" id="2.7.11.1"/>
    </reaction>
    <physiologicalReaction direction="left-to-right" evidence="2">
        <dbReference type="Rhea" id="RHEA:17990"/>
    </physiologicalReaction>
</comment>
<comment type="catalytic activity">
    <reaction evidence="2">
        <text>L-threonyl-[protein] + ATP = O-phospho-L-threonyl-[protein] + ADP + H(+)</text>
        <dbReference type="Rhea" id="RHEA:46608"/>
        <dbReference type="Rhea" id="RHEA-COMP:11060"/>
        <dbReference type="Rhea" id="RHEA-COMP:11605"/>
        <dbReference type="ChEBI" id="CHEBI:15378"/>
        <dbReference type="ChEBI" id="CHEBI:30013"/>
        <dbReference type="ChEBI" id="CHEBI:30616"/>
        <dbReference type="ChEBI" id="CHEBI:61977"/>
        <dbReference type="ChEBI" id="CHEBI:456216"/>
        <dbReference type="EC" id="2.7.11.1"/>
    </reaction>
    <physiologicalReaction direction="left-to-right" evidence="2">
        <dbReference type="Rhea" id="RHEA:46609"/>
    </physiologicalReaction>
</comment>
<comment type="cofactor">
    <cofactor evidence="1">
        <name>Mg(2+)</name>
        <dbReference type="ChEBI" id="CHEBI:18420"/>
    </cofactor>
</comment>
<comment type="activity regulation">
    <text evidence="1">Inhibited by the C-terminal non-catalytic region. Activated by caspase-cleavage. Full activation also requires homodimerization and autophosphorylation of Thr-183. Activated by RASSF1 which acts by preventing its dephosphorylation (By similarity).</text>
</comment>
<comment type="subunit">
    <text evidence="2">Homodimer; mediated via the coiled-coil region. Interacts with NORE1, which inhibits autoactivation. Interacts with and stabilizes SAV1. Interacts with RASSF1. Interacts with FOXO3. Interacts with RASSF2 (via SARAH domain). Interacts with AR, PKB/AKT1, TNNI3 and SIRT1. Interacts with DLG5 (via PDZ domain 3). Interacts with MARK3 and SCRIB in the presence of DLG5.</text>
</comment>
<comment type="subcellular location">
    <subcellularLocation>
        <location evidence="1">Cytoplasm</location>
    </subcellularLocation>
    <subcellularLocation>
        <location evidence="1">Nucleus</location>
    </subcellularLocation>
    <text evidence="1">The caspase-cleaved form cycles between nucleus and cytoplasm.</text>
</comment>
<comment type="PTM">
    <text evidence="2">Autophosphorylated on serine and threonine residues. Phosphorylation at Thr-387 by PKB/AKT1, leads to inhibition of its: kinase activity, nuclear translocation and autophosphorylation at Thr-183. It also diminishes its cleavage by caspases and its ability to phosphorylate FOXO3 (By similarity).</text>
</comment>
<comment type="PTM">
    <text evidence="1">Proteolytically cleaved by caspase-3 during apoptosis at Asp-326 and Asp-349 resulting in a 37 kDa or a 39 kDa subunit respectively. The 39 kDa subunit is further cleaved into the 37 kDa form. Proteolytic cleavage results in kinase activation and nuclear translocation of the truncated form (MST1/N). It is less likely that cleavage at Asp-349 is a prerequisite for activation as this site is not conserved in the murine ortholog (By similarity).</text>
</comment>
<comment type="similarity">
    <text evidence="8">Belongs to the protein kinase superfamily. STE Ser/Thr protein kinase family. STE20 subfamily.</text>
</comment>
<comment type="sequence caution" evidence="8">
    <conflict type="miscellaneous discrepancy">
        <sequence resource="EMBL-CDS" id="AAI12754"/>
    </conflict>
    <text>Contaminating sequence. Potential poly-A sequence.</text>
</comment>
<protein>
    <recommendedName>
        <fullName>Serine/threonine-protein kinase 4</fullName>
        <ecNumber>2.7.11.1</ecNumber>
    </recommendedName>
    <alternativeName>
        <fullName>Mammalian STE20-like protein kinase 1</fullName>
        <shortName>MST-1</shortName>
    </alternativeName>
    <alternativeName>
        <fullName>STE20-like kinase MST1</fullName>
    </alternativeName>
    <component>
        <recommendedName>
            <fullName>Serine/threonine-protein kinase 4 37kDa subunit</fullName>
            <shortName>MST1/N</shortName>
        </recommendedName>
    </component>
    <component>
        <recommendedName>
            <fullName>Serine/threonine-protein kinase 4 18kDa subunit</fullName>
            <shortName>MST1/C</shortName>
        </recommendedName>
    </component>
</protein>
<organism>
    <name type="scientific">Bos taurus</name>
    <name type="common">Bovine</name>
    <dbReference type="NCBI Taxonomy" id="9913"/>
    <lineage>
        <taxon>Eukaryota</taxon>
        <taxon>Metazoa</taxon>
        <taxon>Chordata</taxon>
        <taxon>Craniata</taxon>
        <taxon>Vertebrata</taxon>
        <taxon>Euteleostomi</taxon>
        <taxon>Mammalia</taxon>
        <taxon>Eutheria</taxon>
        <taxon>Laurasiatheria</taxon>
        <taxon>Artiodactyla</taxon>
        <taxon>Ruminantia</taxon>
        <taxon>Pecora</taxon>
        <taxon>Bovidae</taxon>
        <taxon>Bovinae</taxon>
        <taxon>Bos</taxon>
    </lineage>
</organism>